<organism>
    <name type="scientific">Alopias vulpinus</name>
    <name type="common">Common thresher shark</name>
    <name type="synonym">Squalus vulpinus</name>
    <dbReference type="NCBI Taxonomy" id="7852"/>
    <lineage>
        <taxon>Eukaryota</taxon>
        <taxon>Metazoa</taxon>
        <taxon>Chordata</taxon>
        <taxon>Craniata</taxon>
        <taxon>Vertebrata</taxon>
        <taxon>Chondrichthyes</taxon>
        <taxon>Elasmobranchii</taxon>
        <taxon>Galeomorphii</taxon>
        <taxon>Galeoidea</taxon>
        <taxon>Lamniformes</taxon>
        <taxon>Alopiidae</taxon>
        <taxon>Alopias</taxon>
    </lineage>
</organism>
<gene>
    <name type="primary">WNT-5A</name>
</gene>
<comment type="function">
    <text evidence="1">Ligand for members of the frizzled family of seven transmembrane receptors. Can activate or inhibit canonical Wnt signaling, depending on receptor context. Required during embryogenesis for extension of the primary anterior-posterior axis.</text>
</comment>
<comment type="subcellular location">
    <subcellularLocation>
        <location evidence="4">Secreted</location>
        <location evidence="4">Extracellular space</location>
        <location evidence="4">Extracellular matrix</location>
    </subcellularLocation>
    <subcellularLocation>
        <location evidence="4">Secreted</location>
    </subcellularLocation>
</comment>
<comment type="PTM">
    <text evidence="2 5">Palmitoleoylation is required for efficient binding to frizzled receptors. Depalmitoleoylation leads to Wnt signaling pathway inhibition.</text>
</comment>
<comment type="similarity">
    <text evidence="7">Belongs to the Wnt family.</text>
</comment>
<proteinExistence type="inferred from homology"/>
<protein>
    <recommendedName>
        <fullName>Protein Wnt-5a</fullName>
    </recommendedName>
</protein>
<accession>P28103</accession>
<evidence type="ECO:0000250" key="1">
    <source>
        <dbReference type="UniProtKB" id="P22725"/>
    </source>
</evidence>
<evidence type="ECO:0000250" key="2">
    <source>
        <dbReference type="UniProtKB" id="P27467"/>
    </source>
</evidence>
<evidence type="ECO:0000250" key="3">
    <source>
        <dbReference type="UniProtKB" id="P28026"/>
    </source>
</evidence>
<evidence type="ECO:0000250" key="4">
    <source>
        <dbReference type="UniProtKB" id="P41221"/>
    </source>
</evidence>
<evidence type="ECO:0000250" key="5">
    <source>
        <dbReference type="UniProtKB" id="P56704"/>
    </source>
</evidence>
<evidence type="ECO:0000255" key="6"/>
<evidence type="ECO:0000305" key="7"/>
<sequence length="116" mass="12866">SGSCSLKTCWLQLADFRKVGNALKEKYDSATAMKLNGRGKLVQVNSRFNTPTTLDLVYVDQSPDYCVRNESTGSLGTQGRLCNKTSEGMDGCALMCCGRGYDQFKTVRTERCHCKF</sequence>
<feature type="chain" id="PRO_0000200628" description="Protein Wnt-5a">
    <location>
        <begin position="1" status="less than"/>
        <end position="116" status="greater than"/>
    </location>
</feature>
<feature type="lipid moiety-binding region" description="O-palmitoleoyl serine; by PORCN" evidence="5">
    <location>
        <position position="1"/>
    </location>
</feature>
<feature type="glycosylation site" description="N-linked (GlcNAc...) asparagine" evidence="6">
    <location>
        <position position="69"/>
    </location>
</feature>
<feature type="glycosylation site" description="N-linked (GlcNAc...) asparagine" evidence="6">
    <location>
        <position position="83"/>
    </location>
</feature>
<feature type="disulfide bond" evidence="3">
    <location>
        <begin position="82"/>
        <end position="97"/>
    </location>
</feature>
<feature type="non-terminal residue">
    <location>
        <position position="1"/>
    </location>
</feature>
<feature type="non-terminal residue">
    <location>
        <position position="116"/>
    </location>
</feature>
<name>WNT5A_ALOVU</name>
<keyword id="KW-0217">Developmental protein</keyword>
<keyword id="KW-1015">Disulfide bond</keyword>
<keyword id="KW-0272">Extracellular matrix</keyword>
<keyword id="KW-0325">Glycoprotein</keyword>
<keyword id="KW-0449">Lipoprotein</keyword>
<keyword id="KW-0964">Secreted</keyword>
<keyword id="KW-0879">Wnt signaling pathway</keyword>
<dbReference type="EMBL" id="M91254">
    <property type="protein sequence ID" value="AAA48540.1"/>
    <property type="molecule type" value="Genomic_DNA"/>
</dbReference>
<dbReference type="SMR" id="P28103"/>
<dbReference type="GlyCosmos" id="P28103">
    <property type="glycosylation" value="2 sites, No reported glycans"/>
</dbReference>
<dbReference type="GO" id="GO:0005615">
    <property type="term" value="C:extracellular space"/>
    <property type="evidence" value="ECO:0007669"/>
    <property type="project" value="TreeGrafter"/>
</dbReference>
<dbReference type="GO" id="GO:0005125">
    <property type="term" value="F:cytokine activity"/>
    <property type="evidence" value="ECO:0007669"/>
    <property type="project" value="TreeGrafter"/>
</dbReference>
<dbReference type="GO" id="GO:0005109">
    <property type="term" value="F:frizzled binding"/>
    <property type="evidence" value="ECO:0007669"/>
    <property type="project" value="TreeGrafter"/>
</dbReference>
<dbReference type="GO" id="GO:0060070">
    <property type="term" value="P:canonical Wnt signaling pathway"/>
    <property type="evidence" value="ECO:0007669"/>
    <property type="project" value="TreeGrafter"/>
</dbReference>
<dbReference type="GO" id="GO:0045165">
    <property type="term" value="P:cell fate commitment"/>
    <property type="evidence" value="ECO:0007669"/>
    <property type="project" value="TreeGrafter"/>
</dbReference>
<dbReference type="GO" id="GO:0030182">
    <property type="term" value="P:neuron differentiation"/>
    <property type="evidence" value="ECO:0007669"/>
    <property type="project" value="TreeGrafter"/>
</dbReference>
<dbReference type="Gene3D" id="3.30.2460.20">
    <property type="match status" value="1"/>
</dbReference>
<dbReference type="InterPro" id="IPR005817">
    <property type="entry name" value="Wnt"/>
</dbReference>
<dbReference type="InterPro" id="IPR043158">
    <property type="entry name" value="Wnt_C"/>
</dbReference>
<dbReference type="PANTHER" id="PTHR12027:SF33">
    <property type="entry name" value="PROTEIN WNT-5A"/>
    <property type="match status" value="1"/>
</dbReference>
<dbReference type="PANTHER" id="PTHR12027">
    <property type="entry name" value="WNT RELATED"/>
    <property type="match status" value="1"/>
</dbReference>
<dbReference type="Pfam" id="PF00110">
    <property type="entry name" value="wnt"/>
    <property type="match status" value="1"/>
</dbReference>
<dbReference type="SMART" id="SM00097">
    <property type="entry name" value="WNT1"/>
    <property type="match status" value="1"/>
</dbReference>
<reference key="1">
    <citation type="journal article" date="1992" name="Proc. Natl. Acad. Sci. U.S.A.">
        <title>Diversification of the Wnt gene family on the ancestral lineage of vertebrates.</title>
        <authorList>
            <person name="Sidow A."/>
        </authorList>
    </citation>
    <scope>NUCLEOTIDE SEQUENCE [GENOMIC DNA]</scope>
</reference>